<gene>
    <name evidence="1" type="primary">dapA</name>
    <name type="ordered locus">Daro_0846</name>
</gene>
<name>DAPA_DECAR</name>
<sequence length="292" mass="31116">MITGSIVAIVTPMHEDGSLDLNSFRNLLDFHVQEGTDAIVVVGTTGESPTVNVEEHCELIKIAVDHVAGRIPVIAGTGANSTAEAIELTEFAKKAGANMALSVVPYYNKPTQEGLYRHFKAIAEAVELPVILYNVPGRTVADMSNDTILRLAEVPGIVGVKDATGNIDRACDLIARAPKDFALYTGDDMTAVATISLGFHGDISVTANVAPRLMHEMCVAAASGDIAKAREIHFKVLALHRDLFCEANPIPVKWAVHKLGLMPNGIRLPLTTLSEANQPRVLAALRQAGLVA</sequence>
<comment type="function">
    <text evidence="1">Catalyzes the condensation of (S)-aspartate-beta-semialdehyde [(S)-ASA] and pyruvate to 4-hydroxy-tetrahydrodipicolinate (HTPA).</text>
</comment>
<comment type="catalytic activity">
    <reaction evidence="1">
        <text>L-aspartate 4-semialdehyde + pyruvate = (2S,4S)-4-hydroxy-2,3,4,5-tetrahydrodipicolinate + H2O + H(+)</text>
        <dbReference type="Rhea" id="RHEA:34171"/>
        <dbReference type="ChEBI" id="CHEBI:15361"/>
        <dbReference type="ChEBI" id="CHEBI:15377"/>
        <dbReference type="ChEBI" id="CHEBI:15378"/>
        <dbReference type="ChEBI" id="CHEBI:67139"/>
        <dbReference type="ChEBI" id="CHEBI:537519"/>
        <dbReference type="EC" id="4.3.3.7"/>
    </reaction>
</comment>
<comment type="pathway">
    <text evidence="1">Amino-acid biosynthesis; L-lysine biosynthesis via DAP pathway; (S)-tetrahydrodipicolinate from L-aspartate: step 3/4.</text>
</comment>
<comment type="subunit">
    <text evidence="1">Homotetramer; dimer of dimers.</text>
</comment>
<comment type="subcellular location">
    <subcellularLocation>
        <location evidence="1">Cytoplasm</location>
    </subcellularLocation>
</comment>
<comment type="similarity">
    <text evidence="1">Belongs to the DapA family.</text>
</comment>
<comment type="caution">
    <text evidence="2">Was originally thought to be a dihydrodipicolinate synthase (DHDPS), catalyzing the condensation of (S)-aspartate-beta-semialdehyde [(S)-ASA] and pyruvate to dihydrodipicolinate (DHDP). However, it was shown in E.coli that the product of the enzymatic reaction is not dihydrodipicolinate but in fact (4S)-4-hydroxy-2,3,4,5-tetrahydro-(2S)-dipicolinic acid (HTPA), and that the consecutive dehydration reaction leading to DHDP is not spontaneous but catalyzed by DapB.</text>
</comment>
<evidence type="ECO:0000255" key="1">
    <source>
        <dbReference type="HAMAP-Rule" id="MF_00418"/>
    </source>
</evidence>
<evidence type="ECO:0000305" key="2"/>
<proteinExistence type="inferred from homology"/>
<feature type="chain" id="PRO_1000050183" description="4-hydroxy-tetrahydrodipicolinate synthase">
    <location>
        <begin position="1"/>
        <end position="292"/>
    </location>
</feature>
<feature type="active site" description="Proton donor/acceptor" evidence="1">
    <location>
        <position position="133"/>
    </location>
</feature>
<feature type="active site" description="Schiff-base intermediate with substrate" evidence="1">
    <location>
        <position position="161"/>
    </location>
</feature>
<feature type="binding site" evidence="1">
    <location>
        <position position="45"/>
    </location>
    <ligand>
        <name>pyruvate</name>
        <dbReference type="ChEBI" id="CHEBI:15361"/>
    </ligand>
</feature>
<feature type="binding site" evidence="1">
    <location>
        <position position="203"/>
    </location>
    <ligand>
        <name>pyruvate</name>
        <dbReference type="ChEBI" id="CHEBI:15361"/>
    </ligand>
</feature>
<feature type="site" description="Part of a proton relay during catalysis" evidence="1">
    <location>
        <position position="44"/>
    </location>
</feature>
<feature type="site" description="Part of a proton relay during catalysis" evidence="1">
    <location>
        <position position="107"/>
    </location>
</feature>
<dbReference type="EC" id="4.3.3.7" evidence="1"/>
<dbReference type="EMBL" id="CP000089">
    <property type="protein sequence ID" value="AAZ45602.1"/>
    <property type="molecule type" value="Genomic_DNA"/>
</dbReference>
<dbReference type="SMR" id="Q47HS9"/>
<dbReference type="STRING" id="159087.Daro_0846"/>
<dbReference type="KEGG" id="dar:Daro_0846"/>
<dbReference type="eggNOG" id="COG0329">
    <property type="taxonomic scope" value="Bacteria"/>
</dbReference>
<dbReference type="HOGENOM" id="CLU_049343_7_1_4"/>
<dbReference type="OrthoDB" id="9782828at2"/>
<dbReference type="UniPathway" id="UPA00034">
    <property type="reaction ID" value="UER00017"/>
</dbReference>
<dbReference type="GO" id="GO:0005829">
    <property type="term" value="C:cytosol"/>
    <property type="evidence" value="ECO:0007669"/>
    <property type="project" value="TreeGrafter"/>
</dbReference>
<dbReference type="GO" id="GO:0008840">
    <property type="term" value="F:4-hydroxy-tetrahydrodipicolinate synthase activity"/>
    <property type="evidence" value="ECO:0007669"/>
    <property type="project" value="UniProtKB-UniRule"/>
</dbReference>
<dbReference type="GO" id="GO:0019877">
    <property type="term" value="P:diaminopimelate biosynthetic process"/>
    <property type="evidence" value="ECO:0007669"/>
    <property type="project" value="UniProtKB-UniRule"/>
</dbReference>
<dbReference type="GO" id="GO:0009089">
    <property type="term" value="P:lysine biosynthetic process via diaminopimelate"/>
    <property type="evidence" value="ECO:0007669"/>
    <property type="project" value="UniProtKB-UniRule"/>
</dbReference>
<dbReference type="CDD" id="cd00950">
    <property type="entry name" value="DHDPS"/>
    <property type="match status" value="1"/>
</dbReference>
<dbReference type="Gene3D" id="3.20.20.70">
    <property type="entry name" value="Aldolase class I"/>
    <property type="match status" value="1"/>
</dbReference>
<dbReference type="HAMAP" id="MF_00418">
    <property type="entry name" value="DapA"/>
    <property type="match status" value="1"/>
</dbReference>
<dbReference type="InterPro" id="IPR013785">
    <property type="entry name" value="Aldolase_TIM"/>
</dbReference>
<dbReference type="InterPro" id="IPR005263">
    <property type="entry name" value="DapA"/>
</dbReference>
<dbReference type="InterPro" id="IPR002220">
    <property type="entry name" value="DapA-like"/>
</dbReference>
<dbReference type="InterPro" id="IPR020625">
    <property type="entry name" value="Schiff_base-form_aldolases_AS"/>
</dbReference>
<dbReference type="InterPro" id="IPR020624">
    <property type="entry name" value="Schiff_base-form_aldolases_CS"/>
</dbReference>
<dbReference type="NCBIfam" id="TIGR00674">
    <property type="entry name" value="dapA"/>
    <property type="match status" value="1"/>
</dbReference>
<dbReference type="PANTHER" id="PTHR12128:SF66">
    <property type="entry name" value="4-HYDROXY-2-OXOGLUTARATE ALDOLASE, MITOCHONDRIAL"/>
    <property type="match status" value="1"/>
</dbReference>
<dbReference type="PANTHER" id="PTHR12128">
    <property type="entry name" value="DIHYDRODIPICOLINATE SYNTHASE"/>
    <property type="match status" value="1"/>
</dbReference>
<dbReference type="Pfam" id="PF00701">
    <property type="entry name" value="DHDPS"/>
    <property type="match status" value="1"/>
</dbReference>
<dbReference type="PIRSF" id="PIRSF001365">
    <property type="entry name" value="DHDPS"/>
    <property type="match status" value="1"/>
</dbReference>
<dbReference type="PRINTS" id="PR00146">
    <property type="entry name" value="DHPICSNTHASE"/>
</dbReference>
<dbReference type="SMART" id="SM01130">
    <property type="entry name" value="DHDPS"/>
    <property type="match status" value="1"/>
</dbReference>
<dbReference type="SUPFAM" id="SSF51569">
    <property type="entry name" value="Aldolase"/>
    <property type="match status" value="1"/>
</dbReference>
<dbReference type="PROSITE" id="PS00665">
    <property type="entry name" value="DHDPS_1"/>
    <property type="match status" value="1"/>
</dbReference>
<dbReference type="PROSITE" id="PS00666">
    <property type="entry name" value="DHDPS_2"/>
    <property type="match status" value="1"/>
</dbReference>
<keyword id="KW-0028">Amino-acid biosynthesis</keyword>
<keyword id="KW-0963">Cytoplasm</keyword>
<keyword id="KW-0220">Diaminopimelate biosynthesis</keyword>
<keyword id="KW-0456">Lyase</keyword>
<keyword id="KW-0457">Lysine biosynthesis</keyword>
<keyword id="KW-0704">Schiff base</keyword>
<organism>
    <name type="scientific">Dechloromonas aromatica (strain RCB)</name>
    <dbReference type="NCBI Taxonomy" id="159087"/>
    <lineage>
        <taxon>Bacteria</taxon>
        <taxon>Pseudomonadati</taxon>
        <taxon>Pseudomonadota</taxon>
        <taxon>Betaproteobacteria</taxon>
        <taxon>Rhodocyclales</taxon>
        <taxon>Azonexaceae</taxon>
        <taxon>Dechloromonas</taxon>
    </lineage>
</organism>
<accession>Q47HS9</accession>
<reference key="1">
    <citation type="journal article" date="2009" name="BMC Genomics">
        <title>Metabolic analysis of the soil microbe Dechloromonas aromatica str. RCB: indications of a surprisingly complex life-style and cryptic anaerobic pathways for aromatic degradation.</title>
        <authorList>
            <person name="Salinero K.K."/>
            <person name="Keller K."/>
            <person name="Feil W.S."/>
            <person name="Feil H."/>
            <person name="Trong S."/>
            <person name="Di Bartolo G."/>
            <person name="Lapidus A."/>
        </authorList>
    </citation>
    <scope>NUCLEOTIDE SEQUENCE [LARGE SCALE GENOMIC DNA]</scope>
    <source>
        <strain>RCB</strain>
    </source>
</reference>
<protein>
    <recommendedName>
        <fullName evidence="1">4-hydroxy-tetrahydrodipicolinate synthase</fullName>
        <shortName evidence="1">HTPA synthase</shortName>
        <ecNumber evidence="1">4.3.3.7</ecNumber>
    </recommendedName>
</protein>